<geneLocation type="mitochondrion"/>
<accession>Q33688</accession>
<organism>
    <name type="scientific">Arctocephalus gazella</name>
    <name type="common">Antarctic fur seal</name>
    <dbReference type="NCBI Taxonomy" id="37190"/>
    <lineage>
        <taxon>Eukaryota</taxon>
        <taxon>Metazoa</taxon>
        <taxon>Chordata</taxon>
        <taxon>Craniata</taxon>
        <taxon>Vertebrata</taxon>
        <taxon>Euteleostomi</taxon>
        <taxon>Mammalia</taxon>
        <taxon>Eutheria</taxon>
        <taxon>Laurasiatheria</taxon>
        <taxon>Carnivora</taxon>
        <taxon>Caniformia</taxon>
        <taxon>Pinnipedia</taxon>
        <taxon>Otariidae</taxon>
        <taxon>Arctocephalus</taxon>
    </lineage>
</organism>
<protein>
    <recommendedName>
        <fullName>Cytochrome b</fullName>
    </recommendedName>
    <alternativeName>
        <fullName>Complex III subunit 3</fullName>
    </alternativeName>
    <alternativeName>
        <fullName>Complex III subunit III</fullName>
    </alternativeName>
    <alternativeName>
        <fullName>Cytochrome b-c1 complex subunit 3</fullName>
    </alternativeName>
    <alternativeName>
        <fullName>Ubiquinol-cytochrome-c reductase complex cytochrome b subunit</fullName>
    </alternativeName>
</protein>
<evidence type="ECO:0000250" key="1"/>
<evidence type="ECO:0000250" key="2">
    <source>
        <dbReference type="UniProtKB" id="P00157"/>
    </source>
</evidence>
<evidence type="ECO:0000255" key="3">
    <source>
        <dbReference type="PROSITE-ProRule" id="PRU00967"/>
    </source>
</evidence>
<evidence type="ECO:0000255" key="4">
    <source>
        <dbReference type="PROSITE-ProRule" id="PRU00968"/>
    </source>
</evidence>
<proteinExistence type="inferred from homology"/>
<keyword id="KW-0249">Electron transport</keyword>
<keyword id="KW-0349">Heme</keyword>
<keyword id="KW-0408">Iron</keyword>
<keyword id="KW-0472">Membrane</keyword>
<keyword id="KW-0479">Metal-binding</keyword>
<keyword id="KW-0496">Mitochondrion</keyword>
<keyword id="KW-0999">Mitochondrion inner membrane</keyword>
<keyword id="KW-0679">Respiratory chain</keyword>
<keyword id="KW-0812">Transmembrane</keyword>
<keyword id="KW-1133">Transmembrane helix</keyword>
<keyword id="KW-0813">Transport</keyword>
<keyword id="KW-0830">Ubiquinone</keyword>
<sequence>MTNIRKMHPLAKIINNSLIDLPAPSNISAWWNFGSLLAVCLALQILTGLFLAMHYTSDTTTAFSSVTHICRDVNYGWVIRYMHANGASMFFICLYMHVGRGLYYGSYTLTETWNIGIILLFTIMATAFMGYVLPWGQMSFWGATVITNLLSAIPYIGTNLVEWIWGGFSVDKATLTRFFAFHFILPFVVSALVMVHLLFLHETGSNNPSGVSSDSDKIPFHPYYTIKDILGALLLILILMLLVMFSPDLLGDPDNYIPANPLSTPPHIKPEWYFLFAYAILRSIPNKLGGVLALLLSILILAIIPLLHTSKQRGMMFRPISQFLFWLLVADLLALTWIGGQPVEYPFITIGQLASILYFAILLILMPIAGIIENNILKW</sequence>
<name>CYB_ARCGZ</name>
<gene>
    <name type="primary">MT-CYB</name>
    <name type="synonym">COB</name>
    <name type="synonym">CYTB</name>
    <name type="synonym">MTCYB</name>
</gene>
<comment type="function">
    <text evidence="2">Component of the ubiquinol-cytochrome c reductase complex (complex III or cytochrome b-c1 complex) that is part of the mitochondrial respiratory chain. The b-c1 complex mediates electron transfer from ubiquinol to cytochrome c. Contributes to the generation of a proton gradient across the mitochondrial membrane that is then used for ATP synthesis.</text>
</comment>
<comment type="cofactor">
    <cofactor evidence="2">
        <name>heme b</name>
        <dbReference type="ChEBI" id="CHEBI:60344"/>
    </cofactor>
    <text evidence="2">Binds 2 heme b groups non-covalently.</text>
</comment>
<comment type="subunit">
    <text evidence="2">The cytochrome bc1 complex contains 11 subunits: 3 respiratory subunits (MT-CYB, CYC1 and UQCRFS1), 2 core proteins (UQCRC1 and UQCRC2) and 6 low-molecular weight proteins (UQCRH/QCR6, UQCRB/QCR7, UQCRQ/QCR8, UQCR10/QCR9, UQCR11/QCR10 and a cleavage product of UQCRFS1). This cytochrome bc1 complex then forms a dimer.</text>
</comment>
<comment type="subcellular location">
    <subcellularLocation>
        <location evidence="2">Mitochondrion inner membrane</location>
        <topology evidence="2">Multi-pass membrane protein</topology>
    </subcellularLocation>
</comment>
<comment type="miscellaneous">
    <text evidence="1">Heme 1 (or BL or b562) is low-potential and absorbs at about 562 nm, and heme 2 (or BH or b566) is high-potential and absorbs at about 566 nm.</text>
</comment>
<comment type="similarity">
    <text evidence="3 4">Belongs to the cytochrome b family.</text>
</comment>
<comment type="caution">
    <text evidence="2">The full-length protein contains only eight transmembrane helices, not nine as predicted by bioinformatics tools.</text>
</comment>
<feature type="chain" id="PRO_0000060619" description="Cytochrome b">
    <location>
        <begin position="1"/>
        <end position="379"/>
    </location>
</feature>
<feature type="transmembrane region" description="Helical" evidence="2">
    <location>
        <begin position="33"/>
        <end position="53"/>
    </location>
</feature>
<feature type="transmembrane region" description="Helical" evidence="2">
    <location>
        <begin position="77"/>
        <end position="98"/>
    </location>
</feature>
<feature type="transmembrane region" description="Helical" evidence="2">
    <location>
        <begin position="113"/>
        <end position="133"/>
    </location>
</feature>
<feature type="transmembrane region" description="Helical" evidence="2">
    <location>
        <begin position="178"/>
        <end position="198"/>
    </location>
</feature>
<feature type="transmembrane region" description="Helical" evidence="2">
    <location>
        <begin position="226"/>
        <end position="246"/>
    </location>
</feature>
<feature type="transmembrane region" description="Helical" evidence="2">
    <location>
        <begin position="288"/>
        <end position="308"/>
    </location>
</feature>
<feature type="transmembrane region" description="Helical" evidence="2">
    <location>
        <begin position="320"/>
        <end position="340"/>
    </location>
</feature>
<feature type="transmembrane region" description="Helical" evidence="2">
    <location>
        <begin position="347"/>
        <end position="367"/>
    </location>
</feature>
<feature type="binding site" description="axial binding residue" evidence="2">
    <location>
        <position position="83"/>
    </location>
    <ligand>
        <name>heme b</name>
        <dbReference type="ChEBI" id="CHEBI:60344"/>
        <label>b562</label>
    </ligand>
    <ligandPart>
        <name>Fe</name>
        <dbReference type="ChEBI" id="CHEBI:18248"/>
    </ligandPart>
</feature>
<feature type="binding site" description="axial binding residue" evidence="2">
    <location>
        <position position="97"/>
    </location>
    <ligand>
        <name>heme b</name>
        <dbReference type="ChEBI" id="CHEBI:60344"/>
        <label>b566</label>
    </ligand>
    <ligandPart>
        <name>Fe</name>
        <dbReference type="ChEBI" id="CHEBI:18248"/>
    </ligandPart>
</feature>
<feature type="binding site" description="axial binding residue" evidence="2">
    <location>
        <position position="182"/>
    </location>
    <ligand>
        <name>heme b</name>
        <dbReference type="ChEBI" id="CHEBI:60344"/>
        <label>b562</label>
    </ligand>
    <ligandPart>
        <name>Fe</name>
        <dbReference type="ChEBI" id="CHEBI:18248"/>
    </ligandPart>
</feature>
<feature type="binding site" description="axial binding residue" evidence="2">
    <location>
        <position position="196"/>
    </location>
    <ligand>
        <name>heme b</name>
        <dbReference type="ChEBI" id="CHEBI:60344"/>
        <label>b566</label>
    </ligand>
    <ligandPart>
        <name>Fe</name>
        <dbReference type="ChEBI" id="CHEBI:18248"/>
    </ligandPart>
</feature>
<feature type="binding site" evidence="2">
    <location>
        <position position="201"/>
    </location>
    <ligand>
        <name>a ubiquinone</name>
        <dbReference type="ChEBI" id="CHEBI:16389"/>
    </ligand>
</feature>
<reference key="1">
    <citation type="journal article" date="1995" name="J. Mol. Evol.">
        <title>A molecular view of pinniped relationships with particular emphasis on the true seals.</title>
        <authorList>
            <person name="Arnason U."/>
            <person name="Bodin K."/>
            <person name="Gullberg A."/>
            <person name="Ledje C."/>
            <person name="Mouchaty S."/>
        </authorList>
    </citation>
    <scope>NUCLEOTIDE SEQUENCE [GENOMIC DNA]</scope>
</reference>
<dbReference type="EMBL" id="X82292">
    <property type="protein sequence ID" value="CAA57735.1"/>
    <property type="molecule type" value="Genomic_DNA"/>
</dbReference>
<dbReference type="PIR" id="S58458">
    <property type="entry name" value="S58458"/>
</dbReference>
<dbReference type="SMR" id="Q33688"/>
<dbReference type="GO" id="GO:0005743">
    <property type="term" value="C:mitochondrial inner membrane"/>
    <property type="evidence" value="ECO:0007669"/>
    <property type="project" value="UniProtKB-SubCell"/>
</dbReference>
<dbReference type="GO" id="GO:0045275">
    <property type="term" value="C:respiratory chain complex III"/>
    <property type="evidence" value="ECO:0007669"/>
    <property type="project" value="InterPro"/>
</dbReference>
<dbReference type="GO" id="GO:0046872">
    <property type="term" value="F:metal ion binding"/>
    <property type="evidence" value="ECO:0007669"/>
    <property type="project" value="UniProtKB-KW"/>
</dbReference>
<dbReference type="GO" id="GO:0008121">
    <property type="term" value="F:ubiquinol-cytochrome-c reductase activity"/>
    <property type="evidence" value="ECO:0007669"/>
    <property type="project" value="InterPro"/>
</dbReference>
<dbReference type="GO" id="GO:0006122">
    <property type="term" value="P:mitochondrial electron transport, ubiquinol to cytochrome c"/>
    <property type="evidence" value="ECO:0007669"/>
    <property type="project" value="TreeGrafter"/>
</dbReference>
<dbReference type="CDD" id="cd00290">
    <property type="entry name" value="cytochrome_b_C"/>
    <property type="match status" value="1"/>
</dbReference>
<dbReference type="CDD" id="cd00284">
    <property type="entry name" value="Cytochrome_b_N"/>
    <property type="match status" value="1"/>
</dbReference>
<dbReference type="FunFam" id="1.20.810.10:FF:000002">
    <property type="entry name" value="Cytochrome b"/>
    <property type="match status" value="1"/>
</dbReference>
<dbReference type="Gene3D" id="1.20.810.10">
    <property type="entry name" value="Cytochrome Bc1 Complex, Chain C"/>
    <property type="match status" value="1"/>
</dbReference>
<dbReference type="InterPro" id="IPR005798">
    <property type="entry name" value="Cyt_b/b6_C"/>
</dbReference>
<dbReference type="InterPro" id="IPR036150">
    <property type="entry name" value="Cyt_b/b6_C_sf"/>
</dbReference>
<dbReference type="InterPro" id="IPR005797">
    <property type="entry name" value="Cyt_b/b6_N"/>
</dbReference>
<dbReference type="InterPro" id="IPR027387">
    <property type="entry name" value="Cytb/b6-like_sf"/>
</dbReference>
<dbReference type="InterPro" id="IPR030689">
    <property type="entry name" value="Cytochrome_b"/>
</dbReference>
<dbReference type="InterPro" id="IPR048260">
    <property type="entry name" value="Cytochrome_b_C_euk/bac"/>
</dbReference>
<dbReference type="InterPro" id="IPR048259">
    <property type="entry name" value="Cytochrome_b_N_euk/bac"/>
</dbReference>
<dbReference type="InterPro" id="IPR016174">
    <property type="entry name" value="Di-haem_cyt_TM"/>
</dbReference>
<dbReference type="PANTHER" id="PTHR19271">
    <property type="entry name" value="CYTOCHROME B"/>
    <property type="match status" value="1"/>
</dbReference>
<dbReference type="PANTHER" id="PTHR19271:SF16">
    <property type="entry name" value="CYTOCHROME B"/>
    <property type="match status" value="1"/>
</dbReference>
<dbReference type="Pfam" id="PF00032">
    <property type="entry name" value="Cytochrom_B_C"/>
    <property type="match status" value="1"/>
</dbReference>
<dbReference type="Pfam" id="PF00033">
    <property type="entry name" value="Cytochrome_B"/>
    <property type="match status" value="1"/>
</dbReference>
<dbReference type="PIRSF" id="PIRSF038885">
    <property type="entry name" value="COB"/>
    <property type="match status" value="1"/>
</dbReference>
<dbReference type="SUPFAM" id="SSF81648">
    <property type="entry name" value="a domain/subunit of cytochrome bc1 complex (Ubiquinol-cytochrome c reductase)"/>
    <property type="match status" value="1"/>
</dbReference>
<dbReference type="SUPFAM" id="SSF81342">
    <property type="entry name" value="Transmembrane di-heme cytochromes"/>
    <property type="match status" value="1"/>
</dbReference>
<dbReference type="PROSITE" id="PS51003">
    <property type="entry name" value="CYTB_CTER"/>
    <property type="match status" value="1"/>
</dbReference>
<dbReference type="PROSITE" id="PS51002">
    <property type="entry name" value="CYTB_NTER"/>
    <property type="match status" value="1"/>
</dbReference>